<protein>
    <recommendedName>
        <fullName evidence="1">NADH-quinone oxidoreductase subunit C</fullName>
        <ecNumber evidence="1">7.1.1.-</ecNumber>
    </recommendedName>
    <alternativeName>
        <fullName evidence="1">NADH dehydrogenase I subunit C</fullName>
    </alternativeName>
    <alternativeName>
        <fullName evidence="1">NDH-1 subunit C</fullName>
    </alternativeName>
</protein>
<feature type="chain" id="PRO_0000358191" description="NADH-quinone oxidoreductase subunit C">
    <location>
        <begin position="1"/>
        <end position="174"/>
    </location>
</feature>
<proteinExistence type="inferred from homology"/>
<reference key="1">
    <citation type="submission" date="2007-08" db="EMBL/GenBank/DDBJ databases">
        <title>Complete sequence of Roseiflexus castenholzii DSM 13941.</title>
        <authorList>
            <consortium name="US DOE Joint Genome Institute"/>
            <person name="Copeland A."/>
            <person name="Lucas S."/>
            <person name="Lapidus A."/>
            <person name="Barry K."/>
            <person name="Glavina del Rio T."/>
            <person name="Dalin E."/>
            <person name="Tice H."/>
            <person name="Pitluck S."/>
            <person name="Thompson L.S."/>
            <person name="Brettin T."/>
            <person name="Bruce D."/>
            <person name="Detter J.C."/>
            <person name="Han C."/>
            <person name="Tapia R."/>
            <person name="Schmutz J."/>
            <person name="Larimer F."/>
            <person name="Land M."/>
            <person name="Hauser L."/>
            <person name="Kyrpides N."/>
            <person name="Mikhailova N."/>
            <person name="Bryant D.A."/>
            <person name="Hanada S."/>
            <person name="Tsukatani Y."/>
            <person name="Richardson P."/>
        </authorList>
    </citation>
    <scope>NUCLEOTIDE SEQUENCE [LARGE SCALE GENOMIC DNA]</scope>
    <source>
        <strain>DSM 13941 / HLO8</strain>
    </source>
</reference>
<gene>
    <name evidence="1" type="primary">nuoC</name>
    <name type="ordered locus">Rcas_1322</name>
</gene>
<accession>A7NIW0</accession>
<organism>
    <name type="scientific">Roseiflexus castenholzii (strain DSM 13941 / HLO8)</name>
    <dbReference type="NCBI Taxonomy" id="383372"/>
    <lineage>
        <taxon>Bacteria</taxon>
        <taxon>Bacillati</taxon>
        <taxon>Chloroflexota</taxon>
        <taxon>Chloroflexia</taxon>
        <taxon>Chloroflexales</taxon>
        <taxon>Roseiflexineae</taxon>
        <taxon>Roseiflexaceae</taxon>
        <taxon>Roseiflexus</taxon>
    </lineage>
</organism>
<name>NUOC_ROSCS</name>
<evidence type="ECO:0000255" key="1">
    <source>
        <dbReference type="HAMAP-Rule" id="MF_01357"/>
    </source>
</evidence>
<dbReference type="EC" id="7.1.1.-" evidence="1"/>
<dbReference type="EMBL" id="CP000804">
    <property type="protein sequence ID" value="ABU57418.1"/>
    <property type="molecule type" value="Genomic_DNA"/>
</dbReference>
<dbReference type="RefSeq" id="WP_012119847.1">
    <property type="nucleotide sequence ID" value="NC_009767.1"/>
</dbReference>
<dbReference type="SMR" id="A7NIW0"/>
<dbReference type="STRING" id="383372.Rcas_1322"/>
<dbReference type="KEGG" id="rca:Rcas_1322"/>
<dbReference type="eggNOG" id="COG0852">
    <property type="taxonomic scope" value="Bacteria"/>
</dbReference>
<dbReference type="HOGENOM" id="CLU_042628_6_0_0"/>
<dbReference type="OrthoDB" id="9803286at2"/>
<dbReference type="Proteomes" id="UP000000263">
    <property type="component" value="Chromosome"/>
</dbReference>
<dbReference type="GO" id="GO:0005886">
    <property type="term" value="C:plasma membrane"/>
    <property type="evidence" value="ECO:0007669"/>
    <property type="project" value="UniProtKB-SubCell"/>
</dbReference>
<dbReference type="GO" id="GO:0008137">
    <property type="term" value="F:NADH dehydrogenase (ubiquinone) activity"/>
    <property type="evidence" value="ECO:0007669"/>
    <property type="project" value="InterPro"/>
</dbReference>
<dbReference type="GO" id="GO:0050136">
    <property type="term" value="F:NADH:ubiquinone reductase (non-electrogenic) activity"/>
    <property type="evidence" value="ECO:0007669"/>
    <property type="project" value="UniProtKB-UniRule"/>
</dbReference>
<dbReference type="GO" id="GO:0048038">
    <property type="term" value="F:quinone binding"/>
    <property type="evidence" value="ECO:0007669"/>
    <property type="project" value="UniProtKB-KW"/>
</dbReference>
<dbReference type="Gene3D" id="3.30.460.80">
    <property type="entry name" value="NADH:ubiquinone oxidoreductase, 30kDa subunit"/>
    <property type="match status" value="1"/>
</dbReference>
<dbReference type="HAMAP" id="MF_01357">
    <property type="entry name" value="NDH1_NuoC"/>
    <property type="match status" value="1"/>
</dbReference>
<dbReference type="InterPro" id="IPR010218">
    <property type="entry name" value="NADH_DH_suC"/>
</dbReference>
<dbReference type="InterPro" id="IPR037232">
    <property type="entry name" value="NADH_quin_OxRdtase_su_C/D-like"/>
</dbReference>
<dbReference type="InterPro" id="IPR001268">
    <property type="entry name" value="NADH_UbQ_OxRdtase_30kDa_su"/>
</dbReference>
<dbReference type="NCBIfam" id="TIGR01961">
    <property type="entry name" value="NuoC_fam"/>
    <property type="match status" value="1"/>
</dbReference>
<dbReference type="PANTHER" id="PTHR10884:SF14">
    <property type="entry name" value="NADH DEHYDROGENASE [UBIQUINONE] IRON-SULFUR PROTEIN 3, MITOCHONDRIAL"/>
    <property type="match status" value="1"/>
</dbReference>
<dbReference type="PANTHER" id="PTHR10884">
    <property type="entry name" value="NADH DEHYDROGENASE UBIQUINONE IRON-SULFUR PROTEIN 3"/>
    <property type="match status" value="1"/>
</dbReference>
<dbReference type="Pfam" id="PF00329">
    <property type="entry name" value="Complex1_30kDa"/>
    <property type="match status" value="1"/>
</dbReference>
<dbReference type="SUPFAM" id="SSF143243">
    <property type="entry name" value="Nqo5-like"/>
    <property type="match status" value="1"/>
</dbReference>
<keyword id="KW-1003">Cell membrane</keyword>
<keyword id="KW-0472">Membrane</keyword>
<keyword id="KW-0520">NAD</keyword>
<keyword id="KW-0874">Quinone</keyword>
<keyword id="KW-1185">Reference proteome</keyword>
<keyword id="KW-1278">Translocase</keyword>
<keyword id="KW-0813">Transport</keyword>
<keyword id="KW-0830">Ubiquinone</keyword>
<sequence length="174" mass="20027">MALDNPTVLARLQAALPDALLGSSEFRGDLSVHVRPERIVDVARFLRDDPELRYHFLENLCGVDYLGREPRFEVVYHLLSFANRHRICLKVGVSERNPSVPSLTELWPGANYHERETFDMFGIVFTGHPCLDRILMPEDWEGHPLRKDVPLGAEEVAFTFNQDRIYAHKPFAKE</sequence>
<comment type="function">
    <text evidence="1">NDH-1 shuttles electrons from NADH, via FMN and iron-sulfur (Fe-S) centers, to quinones in the respiratory chain. The immediate electron acceptor for the enzyme in this species is believed to be ubiquinone. Couples the redox reaction to proton translocation (for every two electrons transferred, four hydrogen ions are translocated across the cytoplasmic membrane), and thus conserves the redox energy in a proton gradient.</text>
</comment>
<comment type="catalytic activity">
    <reaction evidence="1">
        <text>a quinone + NADH + 5 H(+)(in) = a quinol + NAD(+) + 4 H(+)(out)</text>
        <dbReference type="Rhea" id="RHEA:57888"/>
        <dbReference type="ChEBI" id="CHEBI:15378"/>
        <dbReference type="ChEBI" id="CHEBI:24646"/>
        <dbReference type="ChEBI" id="CHEBI:57540"/>
        <dbReference type="ChEBI" id="CHEBI:57945"/>
        <dbReference type="ChEBI" id="CHEBI:132124"/>
    </reaction>
</comment>
<comment type="subunit">
    <text evidence="1">NDH-1 is composed of 14 different subunits. Subunits NuoB, C, D, E, F, and G constitute the peripheral sector of the complex.</text>
</comment>
<comment type="subcellular location">
    <subcellularLocation>
        <location evidence="1">Cell membrane</location>
        <topology evidence="1">Peripheral membrane protein</topology>
        <orientation evidence="1">Cytoplasmic side</orientation>
    </subcellularLocation>
</comment>
<comment type="similarity">
    <text evidence="1">Belongs to the complex I 30 kDa subunit family.</text>
</comment>